<name>Y2871_PHOLL</name>
<gene>
    <name type="ordered locus">plu2871</name>
</gene>
<proteinExistence type="inferred from homology"/>
<keyword id="KW-1185">Reference proteome</keyword>
<protein>
    <recommendedName>
        <fullName evidence="1">UPF0352 protein plu2871</fullName>
    </recommendedName>
</protein>
<accession>Q7N351</accession>
<evidence type="ECO:0000255" key="1">
    <source>
        <dbReference type="HAMAP-Rule" id="MF_00816"/>
    </source>
</evidence>
<reference key="1">
    <citation type="journal article" date="2003" name="Nat. Biotechnol.">
        <title>The genome sequence of the entomopathogenic bacterium Photorhabdus luminescens.</title>
        <authorList>
            <person name="Duchaud E."/>
            <person name="Rusniok C."/>
            <person name="Frangeul L."/>
            <person name="Buchrieser C."/>
            <person name="Givaudan A."/>
            <person name="Taourit S."/>
            <person name="Bocs S."/>
            <person name="Boursaux-Eude C."/>
            <person name="Chandler M."/>
            <person name="Charles J.-F."/>
            <person name="Dassa E."/>
            <person name="Derose R."/>
            <person name="Derzelle S."/>
            <person name="Freyssinet G."/>
            <person name="Gaudriault S."/>
            <person name="Medigue C."/>
            <person name="Lanois A."/>
            <person name="Powell K."/>
            <person name="Siguier P."/>
            <person name="Vincent R."/>
            <person name="Wingate V."/>
            <person name="Zouine M."/>
            <person name="Glaser P."/>
            <person name="Boemare N."/>
            <person name="Danchin A."/>
            <person name="Kunst F."/>
        </authorList>
    </citation>
    <scope>NUCLEOTIDE SEQUENCE [LARGE SCALE GENOMIC DNA]</scope>
    <source>
        <strain>DSM 15139 / CIP 105565 / TT01</strain>
    </source>
</reference>
<comment type="similarity">
    <text evidence="1">Belongs to the UPF0352 family.</text>
</comment>
<organism>
    <name type="scientific">Photorhabdus laumondii subsp. laumondii (strain DSM 15139 / CIP 105565 / TT01)</name>
    <name type="common">Photorhabdus luminescens subsp. laumondii</name>
    <dbReference type="NCBI Taxonomy" id="243265"/>
    <lineage>
        <taxon>Bacteria</taxon>
        <taxon>Pseudomonadati</taxon>
        <taxon>Pseudomonadota</taxon>
        <taxon>Gammaproteobacteria</taxon>
        <taxon>Enterobacterales</taxon>
        <taxon>Morganellaceae</taxon>
        <taxon>Photorhabdus</taxon>
    </lineage>
</organism>
<dbReference type="EMBL" id="BX571868">
    <property type="protein sequence ID" value="CAE15245.1"/>
    <property type="molecule type" value="Genomic_DNA"/>
</dbReference>
<dbReference type="RefSeq" id="WP_011147091.1">
    <property type="nucleotide sequence ID" value="NC_005126.1"/>
</dbReference>
<dbReference type="SMR" id="Q7N351"/>
<dbReference type="STRING" id="243265.plu2871"/>
<dbReference type="GeneID" id="48849133"/>
<dbReference type="KEGG" id="plu:plu2871"/>
<dbReference type="eggNOG" id="COG3082">
    <property type="taxonomic scope" value="Bacteria"/>
</dbReference>
<dbReference type="HOGENOM" id="CLU_175457_0_0_6"/>
<dbReference type="OrthoDB" id="5771474at2"/>
<dbReference type="Proteomes" id="UP000002514">
    <property type="component" value="Chromosome"/>
</dbReference>
<dbReference type="Gene3D" id="1.10.3390.10">
    <property type="entry name" value="YejL-like"/>
    <property type="match status" value="1"/>
</dbReference>
<dbReference type="HAMAP" id="MF_00816">
    <property type="entry name" value="UPF0352"/>
    <property type="match status" value="1"/>
</dbReference>
<dbReference type="InterPro" id="IPR009857">
    <property type="entry name" value="UPF0352"/>
</dbReference>
<dbReference type="InterPro" id="IPR023202">
    <property type="entry name" value="YejL_sf"/>
</dbReference>
<dbReference type="NCBIfam" id="NF010242">
    <property type="entry name" value="PRK13689.1"/>
    <property type="match status" value="1"/>
</dbReference>
<dbReference type="Pfam" id="PF07208">
    <property type="entry name" value="DUF1414"/>
    <property type="match status" value="1"/>
</dbReference>
<dbReference type="PIRSF" id="PIRSF006188">
    <property type="entry name" value="UCP006188"/>
    <property type="match status" value="1"/>
</dbReference>
<dbReference type="SUPFAM" id="SSF158651">
    <property type="entry name" value="YejL-like"/>
    <property type="match status" value="1"/>
</dbReference>
<sequence>MPQSSRYSDEHVERLLTELVSVLERNRTPTDLSLMVLGNMVTNLINTSISPAQRRHIADSFAHALKSSVNEDKAH</sequence>
<feature type="chain" id="PRO_0000201794" description="UPF0352 protein plu2871">
    <location>
        <begin position="1"/>
        <end position="75"/>
    </location>
</feature>